<accession>Q97Y85</accession>
<gene>
    <name type="primary">cas22</name>
    <name type="ordered locus">SSO8090</name>
</gene>
<protein>
    <recommendedName>
        <fullName>CRISPR-associated endoribonuclease Cas2 2</fullName>
        <ecNumber>3.1.-.-</ecNumber>
    </recommendedName>
</protein>
<name>CAS2B_SACS2</name>
<evidence type="ECO:0000250" key="1"/>
<evidence type="ECO:0000255" key="2"/>
<evidence type="ECO:0000269" key="3">
    <source>
    </source>
</evidence>
<evidence type="ECO:0000305" key="4"/>
<evidence type="ECO:0007829" key="5">
    <source>
        <dbReference type="PDB" id="3EXC"/>
    </source>
</evidence>
<feature type="chain" id="PRO_0000416952" description="CRISPR-associated endoribonuclease Cas2 2">
    <location>
        <begin position="1"/>
        <end position="88"/>
    </location>
</feature>
<feature type="binding site" evidence="2">
    <location>
        <position position="8"/>
    </location>
    <ligand>
        <name>Mg(2+)</name>
        <dbReference type="ChEBI" id="CHEBI:18420"/>
        <note>catalytic</note>
    </ligand>
</feature>
<feature type="strand" evidence="5">
    <location>
        <begin position="2"/>
        <end position="8"/>
    </location>
</feature>
<feature type="helix" evidence="5">
    <location>
        <begin position="12"/>
        <end position="24"/>
    </location>
</feature>
<feature type="strand" evidence="5">
    <location>
        <begin position="28"/>
        <end position="31"/>
    </location>
</feature>
<feature type="strand" evidence="5">
    <location>
        <begin position="34"/>
        <end position="38"/>
    </location>
</feature>
<feature type="helix" evidence="5">
    <location>
        <begin position="44"/>
        <end position="54"/>
    </location>
</feature>
<feature type="turn" evidence="5">
    <location>
        <begin position="57"/>
        <end position="59"/>
    </location>
</feature>
<feature type="strand" evidence="5">
    <location>
        <begin position="61"/>
        <end position="67"/>
    </location>
</feature>
<feature type="helix" evidence="5">
    <location>
        <begin position="69"/>
        <end position="73"/>
    </location>
</feature>
<keyword id="KW-0002">3D-structure</keyword>
<keyword id="KW-0051">Antiviral defense</keyword>
<keyword id="KW-0255">Endonuclease</keyword>
<keyword id="KW-0378">Hydrolase</keyword>
<keyword id="KW-0460">Magnesium</keyword>
<keyword id="KW-0479">Metal-binding</keyword>
<keyword id="KW-0540">Nuclease</keyword>
<keyword id="KW-1185">Reference proteome</keyword>
<organism>
    <name type="scientific">Saccharolobus solfataricus (strain ATCC 35092 / DSM 1617 / JCM 11322 / P2)</name>
    <name type="common">Sulfolobus solfataricus</name>
    <dbReference type="NCBI Taxonomy" id="273057"/>
    <lineage>
        <taxon>Archaea</taxon>
        <taxon>Thermoproteota</taxon>
        <taxon>Thermoprotei</taxon>
        <taxon>Sulfolobales</taxon>
        <taxon>Sulfolobaceae</taxon>
        <taxon>Saccharolobus</taxon>
    </lineage>
</organism>
<dbReference type="EC" id="3.1.-.-"/>
<dbReference type="EMBL" id="AE006641">
    <property type="protein sequence ID" value="AAK54438.1"/>
    <property type="molecule type" value="Genomic_DNA"/>
</dbReference>
<dbReference type="PDB" id="3EXC">
    <property type="method" value="X-ray"/>
    <property type="resolution" value="2.25 A"/>
    <property type="chains" value="X=1-88"/>
</dbReference>
<dbReference type="PDBsum" id="3EXC"/>
<dbReference type="SMR" id="Q97Y85"/>
<dbReference type="STRING" id="273057.SSO8090"/>
<dbReference type="PaxDb" id="273057-SSO8090"/>
<dbReference type="EnsemblBacteria" id="AAK54438">
    <property type="protein sequence ID" value="AAK54438"/>
    <property type="gene ID" value="SSO8090"/>
</dbReference>
<dbReference type="KEGG" id="sso:SSO8090"/>
<dbReference type="PATRIC" id="fig|273057.12.peg.1479"/>
<dbReference type="eggNOG" id="arCOG04194">
    <property type="taxonomic scope" value="Archaea"/>
</dbReference>
<dbReference type="HOGENOM" id="CLU_161124_2_0_2"/>
<dbReference type="InParanoid" id="Q97Y85"/>
<dbReference type="PhylomeDB" id="Q97Y85"/>
<dbReference type="EvolutionaryTrace" id="Q97Y85"/>
<dbReference type="Proteomes" id="UP000001974">
    <property type="component" value="Chromosome"/>
</dbReference>
<dbReference type="GO" id="GO:0046872">
    <property type="term" value="F:metal ion binding"/>
    <property type="evidence" value="ECO:0007669"/>
    <property type="project" value="UniProtKB-UniRule"/>
</dbReference>
<dbReference type="GO" id="GO:0004521">
    <property type="term" value="F:RNA endonuclease activity"/>
    <property type="evidence" value="ECO:0007669"/>
    <property type="project" value="InterPro"/>
</dbReference>
<dbReference type="GO" id="GO:0051607">
    <property type="term" value="P:defense response to virus"/>
    <property type="evidence" value="ECO:0007669"/>
    <property type="project" value="UniProtKB-UniRule"/>
</dbReference>
<dbReference type="GO" id="GO:0043571">
    <property type="term" value="P:maintenance of CRISPR repeat elements"/>
    <property type="evidence" value="ECO:0007669"/>
    <property type="project" value="UniProtKB-UniRule"/>
</dbReference>
<dbReference type="CDD" id="cd09725">
    <property type="entry name" value="Cas2_I_II_III"/>
    <property type="match status" value="1"/>
</dbReference>
<dbReference type="Gene3D" id="3.30.70.240">
    <property type="match status" value="1"/>
</dbReference>
<dbReference type="HAMAP" id="MF_01471">
    <property type="entry name" value="Cas2"/>
    <property type="match status" value="1"/>
</dbReference>
<dbReference type="InterPro" id="IPR021127">
    <property type="entry name" value="CRISPR_associated_Cas2"/>
</dbReference>
<dbReference type="InterPro" id="IPR019199">
    <property type="entry name" value="Virulence_VapD/CRISPR_Cas2"/>
</dbReference>
<dbReference type="NCBIfam" id="TIGR01573">
    <property type="entry name" value="cas2"/>
    <property type="match status" value="1"/>
</dbReference>
<dbReference type="PANTHER" id="PTHR34405">
    <property type="entry name" value="CRISPR-ASSOCIATED ENDORIBONUCLEASE CAS2"/>
    <property type="match status" value="1"/>
</dbReference>
<dbReference type="PANTHER" id="PTHR34405:SF3">
    <property type="entry name" value="CRISPR-ASSOCIATED ENDORIBONUCLEASE CAS2 3"/>
    <property type="match status" value="1"/>
</dbReference>
<dbReference type="Pfam" id="PF09827">
    <property type="entry name" value="CRISPR_Cas2"/>
    <property type="match status" value="1"/>
</dbReference>
<dbReference type="SUPFAM" id="SSF143430">
    <property type="entry name" value="TTP0101/SSO1404-like"/>
    <property type="match status" value="1"/>
</dbReference>
<reference key="1">
    <citation type="journal article" date="2001" name="Proc. Natl. Acad. Sci. U.S.A.">
        <title>The complete genome of the crenarchaeon Sulfolobus solfataricus P2.</title>
        <authorList>
            <person name="She Q."/>
            <person name="Singh R.K."/>
            <person name="Confalonieri F."/>
            <person name="Zivanovic Y."/>
            <person name="Allard G."/>
            <person name="Awayez M.J."/>
            <person name="Chan-Weiher C.C.-Y."/>
            <person name="Clausen I.G."/>
            <person name="Curtis B.A."/>
            <person name="De Moors A."/>
            <person name="Erauso G."/>
            <person name="Fletcher C."/>
            <person name="Gordon P.M.K."/>
            <person name="Heikamp-de Jong I."/>
            <person name="Jeffries A.C."/>
            <person name="Kozera C.J."/>
            <person name="Medina N."/>
            <person name="Peng X."/>
            <person name="Thi-Ngoc H.P."/>
            <person name="Redder P."/>
            <person name="Schenk M.E."/>
            <person name="Theriault C."/>
            <person name="Tolstrup N."/>
            <person name="Charlebois R.L."/>
            <person name="Doolittle W.F."/>
            <person name="Duguet M."/>
            <person name="Gaasterland T."/>
            <person name="Garrett R.A."/>
            <person name="Ragan M.A."/>
            <person name="Sensen C.W."/>
            <person name="Van der Oost J."/>
        </authorList>
    </citation>
    <scope>NUCLEOTIDE SEQUENCE [LARGE SCALE GENOMIC DNA]</scope>
    <source>
        <strain>ATCC 35092 / DSM 1617 / JCM 11322 / P2</strain>
    </source>
</reference>
<reference key="2">
    <citation type="journal article" date="2008" name="J. Biol. Chem.">
        <title>A novel family of sequence-specific endoribonucleases associated with the clustered regularly interspaced short palindromic repeats.</title>
        <authorList>
            <person name="Beloglazova N."/>
            <person name="Brown G."/>
            <person name="Zimmerman M.D."/>
            <person name="Proudfoot M."/>
            <person name="Makarova K.S."/>
            <person name="Kudritska M."/>
            <person name="Kochinyan S."/>
            <person name="Wang S."/>
            <person name="Chruszcz M."/>
            <person name="Minor W."/>
            <person name="Koonin E.V."/>
            <person name="Edwards A.M."/>
            <person name="Savchenko A."/>
            <person name="Yakunin A.F."/>
        </authorList>
    </citation>
    <scope>FUNCTION AS A SSRNA-SPECIFIC ENDORIBONUCLEASE</scope>
    <source>
        <strain>ATCC 35092 / DSM 1617 / JCM 11322 / P2</strain>
    </source>
</reference>
<reference key="3">
    <citation type="submission" date="2008-10" db="PDB data bank">
        <title>Structure of the RNase SSO8090 from Sulfolobus solfataricus.</title>
        <authorList>
            <person name="Proudfoot M."/>
            <person name="Brown M."/>
            <person name="Singer A.U."/>
            <person name="Skarina T."/>
            <person name="Tan K."/>
            <person name="Kagan O."/>
            <person name="Edwards A.M."/>
            <person name="Joachimiak A."/>
            <person name="Savchenko A."/>
            <person name="Yakunin A.F."/>
        </authorList>
    </citation>
    <scope>X-RAY CRYSTALLOGRAPHY (2.25 ANGSTROMS)</scope>
</reference>
<comment type="function">
    <text evidence="1 3">CRISPR (clustered regularly interspaced short palindromic repeat), is an adaptive immune system that provides protection against mobile genetic elements (viruses, transposable elements and conjugative plasmids). CRISPR clusters contain sequences complementary to antecedent mobile elements and target invading nucleic acids. CRISPR clusters are transcribed and processed into CRISPR RNA (crRNA). Functions as a ssRNA-specific endoribonuclease. Involved in the integration of spacer DNA into the CRISPR cassette (By similarity).</text>
</comment>
<comment type="cofactor">
    <cofactor evidence="1">
        <name>Mg(2+)</name>
        <dbReference type="ChEBI" id="CHEBI:18420"/>
    </cofactor>
</comment>
<comment type="subunit">
    <text evidence="1">Homodimer, forms a heterotetramer with a Cas1 homodimer.</text>
</comment>
<comment type="similarity">
    <text evidence="4">Belongs to the CRISPR-associated endoribonuclease Cas2 protein family.</text>
</comment>
<sequence>MKLLVVYDVSDDSKRNKLANNLKKLGLERIQRSAFEGDIDSQRVKDLVRVVKLIVDTNTDIVHIIPLGIRDWERRIVIGREGLEEWLV</sequence>
<proteinExistence type="evidence at protein level"/>